<comment type="function">
    <text evidence="2">One of the essential components for the initiation of protein synthesis. Protects formylmethionyl-tRNA from spontaneous hydrolysis and promotes its binding to the 30S ribosomal subunits. Also involved in the hydrolysis of GTP during the formation of the 70S ribosomal complex.</text>
</comment>
<comment type="subcellular location">
    <subcellularLocation>
        <location evidence="2">Cytoplasm</location>
    </subcellularLocation>
</comment>
<comment type="similarity">
    <text evidence="2">Belongs to the TRAFAC class translation factor GTPase superfamily. Classic translation factor GTPase family. IF-2 subfamily.</text>
</comment>
<protein>
    <recommendedName>
        <fullName evidence="2">Translation initiation factor IF-2</fullName>
    </recommendedName>
</protein>
<organism>
    <name type="scientific">Buchnera aphidicola subsp. Acyrthosiphon pisum (strain 5A)</name>
    <dbReference type="NCBI Taxonomy" id="563178"/>
    <lineage>
        <taxon>Bacteria</taxon>
        <taxon>Pseudomonadati</taxon>
        <taxon>Pseudomonadota</taxon>
        <taxon>Gammaproteobacteria</taxon>
        <taxon>Enterobacterales</taxon>
        <taxon>Erwiniaceae</taxon>
        <taxon>Buchnera</taxon>
    </lineage>
</organism>
<sequence length="864" mass="97518">MPDISLKVLSNEIKISIQELIKELSIIGITKTEDNYINVLEKNILLKHLESKKKYSLDTLVLQRKTRSTLRISTVGGKNKSVQVEVRKKRAYVKNNKFENESFLNEKKVIKHSMQKTSSLKNKEKKYIKNIEKIELNKSDSRSLNTKKENKLKISNKDEQNKKFNQHRESNSFDLNHKKRIKENKDIRISHKEEKQDYHLTTFLHARQAEDENDREVEIDKRNHGRILKNYRQKKNNKNFHNGRYNKEEIRTFNRNKKNSKQKNKPILLQQVFQKPESIINRDVIISNTITVSDLANKMAIKSSEVIKNMMNMGIIGTINHVLDQDTAQLIAEEMGHKVIVHRENALEELIMKDRDTGNDVSAIRAPVVTIMGHVDHGKTSLLDYIRSTKTAFYEAGGITQNIGAYHVKTDLGSITFLDTPGHSAFTAMRSRGVQITDIVILVVAADDGVMPQTIEAIQHAKEANVPVIVAINKIDKTDSDIDKVRNDLMKYNILSEEWGGENIFVSVSAKTGKGINKLLNVILLQAEMLELKAVTTGMAEGIVVESFLDKGRGPIATVLVKKGQLKKGDVILCGFEYGRIKSLRDASGNEVFSAGPSIPVEVLGLSKVPFSGDVVTVVRDEKKAREVASYRKEKSREKKLSNQNRINLENMFDDINKNNVSELKIILKSDIQGSLEAISGALLKLSTEEVKIKIIGLGIGGITETDASLALASNAIILGFNVRADTSAKKIINSEHLDLRYYSVIYDLLDEVKAAMTGLLSPEYKENIIGLAEVRNTFKSPKFGLIAGCMVTEGVIKRSNPIHILRNNIVIYEGELESLRRFKEDVNEIRNGLECGIGIKNYNDIRVGDIIEVFEVREMKRIL</sequence>
<accession>B8D9G2</accession>
<dbReference type="EMBL" id="CP001161">
    <property type="protein sequence ID" value="ACL30733.1"/>
    <property type="molecule type" value="Genomic_DNA"/>
</dbReference>
<dbReference type="RefSeq" id="WP_009874335.1">
    <property type="nucleotide sequence ID" value="NC_011833.1"/>
</dbReference>
<dbReference type="SMR" id="B8D9G2"/>
<dbReference type="KEGG" id="bap:BUAP5A_370"/>
<dbReference type="HOGENOM" id="CLU_006301_6_3_6"/>
<dbReference type="OrthoDB" id="9811804at2"/>
<dbReference type="Proteomes" id="UP000006904">
    <property type="component" value="Chromosome"/>
</dbReference>
<dbReference type="GO" id="GO:0005829">
    <property type="term" value="C:cytosol"/>
    <property type="evidence" value="ECO:0007669"/>
    <property type="project" value="TreeGrafter"/>
</dbReference>
<dbReference type="GO" id="GO:0005525">
    <property type="term" value="F:GTP binding"/>
    <property type="evidence" value="ECO:0007669"/>
    <property type="project" value="UniProtKB-KW"/>
</dbReference>
<dbReference type="GO" id="GO:0003924">
    <property type="term" value="F:GTPase activity"/>
    <property type="evidence" value="ECO:0007669"/>
    <property type="project" value="UniProtKB-UniRule"/>
</dbReference>
<dbReference type="GO" id="GO:0097216">
    <property type="term" value="F:guanosine tetraphosphate binding"/>
    <property type="evidence" value="ECO:0007669"/>
    <property type="project" value="UniProtKB-ARBA"/>
</dbReference>
<dbReference type="GO" id="GO:0003743">
    <property type="term" value="F:translation initiation factor activity"/>
    <property type="evidence" value="ECO:0007669"/>
    <property type="project" value="UniProtKB-UniRule"/>
</dbReference>
<dbReference type="CDD" id="cd01887">
    <property type="entry name" value="IF2_eIF5B"/>
    <property type="match status" value="1"/>
</dbReference>
<dbReference type="CDD" id="cd03702">
    <property type="entry name" value="IF2_mtIF2_II"/>
    <property type="match status" value="1"/>
</dbReference>
<dbReference type="CDD" id="cd03692">
    <property type="entry name" value="mtIF2_IVc"/>
    <property type="match status" value="1"/>
</dbReference>
<dbReference type="FunFam" id="2.40.30.10:FF:000007">
    <property type="entry name" value="Translation initiation factor IF-2"/>
    <property type="match status" value="1"/>
</dbReference>
<dbReference type="FunFam" id="2.40.30.10:FF:000008">
    <property type="entry name" value="Translation initiation factor IF-2"/>
    <property type="match status" value="1"/>
</dbReference>
<dbReference type="FunFam" id="3.40.50.10050:FF:000001">
    <property type="entry name" value="Translation initiation factor IF-2"/>
    <property type="match status" value="1"/>
</dbReference>
<dbReference type="FunFam" id="3.40.50.300:FF:000019">
    <property type="entry name" value="Translation initiation factor IF-2"/>
    <property type="match status" value="1"/>
</dbReference>
<dbReference type="Gene3D" id="3.40.50.300">
    <property type="entry name" value="P-loop containing nucleotide triphosphate hydrolases"/>
    <property type="match status" value="1"/>
</dbReference>
<dbReference type="Gene3D" id="3.30.56.50">
    <property type="entry name" value="Putative DNA-binding domain, N-terminal subdomain of bacterial translation initiation factor IF2"/>
    <property type="match status" value="1"/>
</dbReference>
<dbReference type="Gene3D" id="2.40.30.10">
    <property type="entry name" value="Translation factors"/>
    <property type="match status" value="2"/>
</dbReference>
<dbReference type="Gene3D" id="3.40.50.10050">
    <property type="entry name" value="Translation initiation factor IF- 2, domain 3"/>
    <property type="match status" value="1"/>
</dbReference>
<dbReference type="HAMAP" id="MF_00100_B">
    <property type="entry name" value="IF_2_B"/>
    <property type="match status" value="1"/>
</dbReference>
<dbReference type="InterPro" id="IPR009061">
    <property type="entry name" value="DNA-bd_dom_put_sf"/>
</dbReference>
<dbReference type="InterPro" id="IPR053905">
    <property type="entry name" value="EF-G-like_DII"/>
</dbReference>
<dbReference type="InterPro" id="IPR004161">
    <property type="entry name" value="EFTu-like_2"/>
</dbReference>
<dbReference type="InterPro" id="IPR013575">
    <property type="entry name" value="IF2_assoc_dom_bac"/>
</dbReference>
<dbReference type="InterPro" id="IPR044145">
    <property type="entry name" value="IF2_II"/>
</dbReference>
<dbReference type="InterPro" id="IPR006847">
    <property type="entry name" value="IF2_N"/>
</dbReference>
<dbReference type="InterPro" id="IPR027417">
    <property type="entry name" value="P-loop_NTPase"/>
</dbReference>
<dbReference type="InterPro" id="IPR005225">
    <property type="entry name" value="Small_GTP-bd"/>
</dbReference>
<dbReference type="InterPro" id="IPR000795">
    <property type="entry name" value="T_Tr_GTP-bd_dom"/>
</dbReference>
<dbReference type="InterPro" id="IPR000178">
    <property type="entry name" value="TF_IF2_bacterial-like"/>
</dbReference>
<dbReference type="InterPro" id="IPR015760">
    <property type="entry name" value="TIF_IF2"/>
</dbReference>
<dbReference type="InterPro" id="IPR023115">
    <property type="entry name" value="TIF_IF2_dom3"/>
</dbReference>
<dbReference type="InterPro" id="IPR036925">
    <property type="entry name" value="TIF_IF2_dom3_sf"/>
</dbReference>
<dbReference type="InterPro" id="IPR009000">
    <property type="entry name" value="Transl_B-barrel_sf"/>
</dbReference>
<dbReference type="NCBIfam" id="TIGR00487">
    <property type="entry name" value="IF-2"/>
    <property type="match status" value="1"/>
</dbReference>
<dbReference type="NCBIfam" id="TIGR00231">
    <property type="entry name" value="small_GTP"/>
    <property type="match status" value="1"/>
</dbReference>
<dbReference type="PANTHER" id="PTHR43381:SF5">
    <property type="entry name" value="TR-TYPE G DOMAIN-CONTAINING PROTEIN"/>
    <property type="match status" value="1"/>
</dbReference>
<dbReference type="PANTHER" id="PTHR43381">
    <property type="entry name" value="TRANSLATION INITIATION FACTOR IF-2-RELATED"/>
    <property type="match status" value="1"/>
</dbReference>
<dbReference type="Pfam" id="PF22042">
    <property type="entry name" value="EF-G_D2"/>
    <property type="match status" value="1"/>
</dbReference>
<dbReference type="Pfam" id="PF00009">
    <property type="entry name" value="GTP_EFTU"/>
    <property type="match status" value="1"/>
</dbReference>
<dbReference type="Pfam" id="PF03144">
    <property type="entry name" value="GTP_EFTU_D2"/>
    <property type="match status" value="1"/>
</dbReference>
<dbReference type="Pfam" id="PF11987">
    <property type="entry name" value="IF-2"/>
    <property type="match status" value="1"/>
</dbReference>
<dbReference type="Pfam" id="PF08364">
    <property type="entry name" value="IF2_assoc"/>
    <property type="match status" value="1"/>
</dbReference>
<dbReference type="Pfam" id="PF04760">
    <property type="entry name" value="IF2_N"/>
    <property type="match status" value="1"/>
</dbReference>
<dbReference type="SUPFAM" id="SSF52156">
    <property type="entry name" value="Initiation factor IF2/eIF5b, domain 3"/>
    <property type="match status" value="1"/>
</dbReference>
<dbReference type="SUPFAM" id="SSF52540">
    <property type="entry name" value="P-loop containing nucleoside triphosphate hydrolases"/>
    <property type="match status" value="1"/>
</dbReference>
<dbReference type="SUPFAM" id="SSF46955">
    <property type="entry name" value="Putative DNA-binding domain"/>
    <property type="match status" value="1"/>
</dbReference>
<dbReference type="SUPFAM" id="SSF50447">
    <property type="entry name" value="Translation proteins"/>
    <property type="match status" value="2"/>
</dbReference>
<dbReference type="PROSITE" id="PS51722">
    <property type="entry name" value="G_TR_2"/>
    <property type="match status" value="1"/>
</dbReference>
<dbReference type="PROSITE" id="PS01176">
    <property type="entry name" value="IF2"/>
    <property type="match status" value="1"/>
</dbReference>
<evidence type="ECO:0000250" key="1"/>
<evidence type="ECO:0000255" key="2">
    <source>
        <dbReference type="HAMAP-Rule" id="MF_00100"/>
    </source>
</evidence>
<evidence type="ECO:0000256" key="3">
    <source>
        <dbReference type="SAM" id="MobiDB-lite"/>
    </source>
</evidence>
<keyword id="KW-0963">Cytoplasm</keyword>
<keyword id="KW-0342">GTP-binding</keyword>
<keyword id="KW-0396">Initiation factor</keyword>
<keyword id="KW-0547">Nucleotide-binding</keyword>
<keyword id="KW-0648">Protein biosynthesis</keyword>
<gene>
    <name evidence="2" type="primary">infB</name>
    <name type="ordered locus">BUAP5A_370</name>
</gene>
<reference key="1">
    <citation type="journal article" date="2009" name="Science">
        <title>The dynamics and time scale of ongoing genomic erosion in symbiotic bacteria.</title>
        <authorList>
            <person name="Moran N.A."/>
            <person name="McLaughlin H.J."/>
            <person name="Sorek R."/>
        </authorList>
    </citation>
    <scope>NUCLEOTIDE SEQUENCE [LARGE SCALE GENOMIC DNA]</scope>
    <source>
        <strain>5A</strain>
    </source>
</reference>
<feature type="chain" id="PRO_1000118752" description="Translation initiation factor IF-2">
    <location>
        <begin position="1"/>
        <end position="864"/>
    </location>
</feature>
<feature type="domain" description="tr-type G">
    <location>
        <begin position="364"/>
        <end position="533"/>
    </location>
</feature>
<feature type="region of interest" description="Disordered" evidence="3">
    <location>
        <begin position="140"/>
        <end position="179"/>
    </location>
</feature>
<feature type="region of interest" description="G1" evidence="1">
    <location>
        <begin position="373"/>
        <end position="380"/>
    </location>
</feature>
<feature type="region of interest" description="G2" evidence="1">
    <location>
        <begin position="398"/>
        <end position="402"/>
    </location>
</feature>
<feature type="region of interest" description="G3" evidence="1">
    <location>
        <begin position="419"/>
        <end position="422"/>
    </location>
</feature>
<feature type="region of interest" description="G4" evidence="1">
    <location>
        <begin position="473"/>
        <end position="476"/>
    </location>
</feature>
<feature type="region of interest" description="G5" evidence="1">
    <location>
        <begin position="509"/>
        <end position="511"/>
    </location>
</feature>
<feature type="compositionally biased region" description="Basic and acidic residues" evidence="3">
    <location>
        <begin position="140"/>
        <end position="171"/>
    </location>
</feature>
<feature type="binding site" evidence="2">
    <location>
        <begin position="373"/>
        <end position="380"/>
    </location>
    <ligand>
        <name>GTP</name>
        <dbReference type="ChEBI" id="CHEBI:37565"/>
    </ligand>
</feature>
<feature type="binding site" evidence="2">
    <location>
        <begin position="419"/>
        <end position="423"/>
    </location>
    <ligand>
        <name>GTP</name>
        <dbReference type="ChEBI" id="CHEBI:37565"/>
    </ligand>
</feature>
<feature type="binding site" evidence="2">
    <location>
        <begin position="473"/>
        <end position="476"/>
    </location>
    <ligand>
        <name>GTP</name>
        <dbReference type="ChEBI" id="CHEBI:37565"/>
    </ligand>
</feature>
<name>IF2_BUCA5</name>
<proteinExistence type="inferred from homology"/>